<proteinExistence type="inferred from homology"/>
<feature type="chain" id="PRO_1000072527" description="Asparagine--tRNA ligase">
    <location>
        <begin position="1"/>
        <end position="442"/>
    </location>
</feature>
<reference key="1">
    <citation type="journal article" date="2009" name="Appl. Environ. Microbiol.">
        <title>Three genomes from the phylum Acidobacteria provide insight into the lifestyles of these microorganisms in soils.</title>
        <authorList>
            <person name="Ward N.L."/>
            <person name="Challacombe J.F."/>
            <person name="Janssen P.H."/>
            <person name="Henrissat B."/>
            <person name="Coutinho P.M."/>
            <person name="Wu M."/>
            <person name="Xie G."/>
            <person name="Haft D.H."/>
            <person name="Sait M."/>
            <person name="Badger J."/>
            <person name="Barabote R.D."/>
            <person name="Bradley B."/>
            <person name="Brettin T.S."/>
            <person name="Brinkac L.M."/>
            <person name="Bruce D."/>
            <person name="Creasy T."/>
            <person name="Daugherty S.C."/>
            <person name="Davidsen T.M."/>
            <person name="DeBoy R.T."/>
            <person name="Detter J.C."/>
            <person name="Dodson R.J."/>
            <person name="Durkin A.S."/>
            <person name="Ganapathy A."/>
            <person name="Gwinn-Giglio M."/>
            <person name="Han C.S."/>
            <person name="Khouri H."/>
            <person name="Kiss H."/>
            <person name="Kothari S.P."/>
            <person name="Madupu R."/>
            <person name="Nelson K.E."/>
            <person name="Nelson W.C."/>
            <person name="Paulsen I."/>
            <person name="Penn K."/>
            <person name="Ren Q."/>
            <person name="Rosovitz M.J."/>
            <person name="Selengut J.D."/>
            <person name="Shrivastava S."/>
            <person name="Sullivan S.A."/>
            <person name="Tapia R."/>
            <person name="Thompson L.S."/>
            <person name="Watkins K.L."/>
            <person name="Yang Q."/>
            <person name="Yu C."/>
            <person name="Zafar N."/>
            <person name="Zhou L."/>
            <person name="Kuske C.R."/>
        </authorList>
    </citation>
    <scope>NUCLEOTIDE SEQUENCE [LARGE SCALE GENOMIC DNA]</scope>
    <source>
        <strain>Ellin345</strain>
    </source>
</reference>
<protein>
    <recommendedName>
        <fullName evidence="1">Asparagine--tRNA ligase</fullName>
        <ecNumber evidence="1">6.1.1.22</ecNumber>
    </recommendedName>
    <alternativeName>
        <fullName evidence="1">Asparaginyl-tRNA synthetase</fullName>
        <shortName evidence="1">AsnRS</shortName>
    </alternativeName>
</protein>
<comment type="catalytic activity">
    <reaction evidence="1">
        <text>tRNA(Asn) + L-asparagine + ATP = L-asparaginyl-tRNA(Asn) + AMP + diphosphate + H(+)</text>
        <dbReference type="Rhea" id="RHEA:11180"/>
        <dbReference type="Rhea" id="RHEA-COMP:9659"/>
        <dbReference type="Rhea" id="RHEA-COMP:9674"/>
        <dbReference type="ChEBI" id="CHEBI:15378"/>
        <dbReference type="ChEBI" id="CHEBI:30616"/>
        <dbReference type="ChEBI" id="CHEBI:33019"/>
        <dbReference type="ChEBI" id="CHEBI:58048"/>
        <dbReference type="ChEBI" id="CHEBI:78442"/>
        <dbReference type="ChEBI" id="CHEBI:78515"/>
        <dbReference type="ChEBI" id="CHEBI:456215"/>
        <dbReference type="EC" id="6.1.1.22"/>
    </reaction>
</comment>
<comment type="subunit">
    <text evidence="1">Homodimer.</text>
</comment>
<comment type="subcellular location">
    <subcellularLocation>
        <location evidence="1">Cytoplasm</location>
    </subcellularLocation>
</comment>
<comment type="similarity">
    <text evidence="1">Belongs to the class-II aminoacyl-tRNA synthetase family.</text>
</comment>
<accession>Q1IHQ3</accession>
<sequence>MEQAPVSTIHEIGKHDGQSVTIKGWLYNLRESGKLLFPIFRDGTGLLQGVLFKKNVSPELFDLVKNLTQESSVIVTGNVRAEQRAPGGYEMDVTALEVVQRVPENEPYPITPKEHGIEFLMEHRHLWVRSQRQAAILRIRGEIVRSAHEFFDKQGFTLTEPPILTPAACEGTSTLFPVDYFGDPAFLTQSGQLYIEATAMALGKVYSFGPTFRAEKSKTRRHLTEFWMVEPEVAFAELDDIMKLAEDFITHIVKSVLERRRDDLKTIERDLSKLENIDTPFPRISYDEAVQMLQEGHAKGELESRFEWGGDLGSPDETYISSKFDRPVMIHRYPVEVKAFYMEPDPNNSKVALCVDVLAPEGYGEVIGGSQRMGSYEKLLARIHEHQLPEESFKWYLDLRKFGGVPHSGFGMGIERAVAWICGLDHVRETIPFARTLHRIYP</sequence>
<organism>
    <name type="scientific">Koribacter versatilis (strain Ellin345)</name>
    <dbReference type="NCBI Taxonomy" id="204669"/>
    <lineage>
        <taxon>Bacteria</taxon>
        <taxon>Pseudomonadati</taxon>
        <taxon>Acidobacteriota</taxon>
        <taxon>Terriglobia</taxon>
        <taxon>Terriglobales</taxon>
        <taxon>Candidatus Korobacteraceae</taxon>
        <taxon>Candidatus Korobacter</taxon>
    </lineage>
</organism>
<keyword id="KW-0030">Aminoacyl-tRNA synthetase</keyword>
<keyword id="KW-0067">ATP-binding</keyword>
<keyword id="KW-0963">Cytoplasm</keyword>
<keyword id="KW-0436">Ligase</keyword>
<keyword id="KW-0547">Nucleotide-binding</keyword>
<keyword id="KW-0648">Protein biosynthesis</keyword>
<keyword id="KW-1185">Reference proteome</keyword>
<name>SYN_KORVE</name>
<gene>
    <name evidence="1" type="primary">asnS</name>
    <name type="ordered locus">Acid345_4597</name>
</gene>
<evidence type="ECO:0000255" key="1">
    <source>
        <dbReference type="HAMAP-Rule" id="MF_00534"/>
    </source>
</evidence>
<dbReference type="EC" id="6.1.1.22" evidence="1"/>
<dbReference type="EMBL" id="CP000360">
    <property type="protein sequence ID" value="ABF43597.1"/>
    <property type="molecule type" value="Genomic_DNA"/>
</dbReference>
<dbReference type="RefSeq" id="WP_011525394.1">
    <property type="nucleotide sequence ID" value="NC_008009.1"/>
</dbReference>
<dbReference type="SMR" id="Q1IHQ3"/>
<dbReference type="STRING" id="204669.Acid345_4597"/>
<dbReference type="EnsemblBacteria" id="ABF43597">
    <property type="protein sequence ID" value="ABF43597"/>
    <property type="gene ID" value="Acid345_4597"/>
</dbReference>
<dbReference type="KEGG" id="aba:Acid345_4597"/>
<dbReference type="eggNOG" id="COG0017">
    <property type="taxonomic scope" value="Bacteria"/>
</dbReference>
<dbReference type="HOGENOM" id="CLU_004553_2_0_0"/>
<dbReference type="OrthoDB" id="9762036at2"/>
<dbReference type="Proteomes" id="UP000002432">
    <property type="component" value="Chromosome"/>
</dbReference>
<dbReference type="GO" id="GO:0005737">
    <property type="term" value="C:cytoplasm"/>
    <property type="evidence" value="ECO:0007669"/>
    <property type="project" value="UniProtKB-SubCell"/>
</dbReference>
<dbReference type="GO" id="GO:0004816">
    <property type="term" value="F:asparagine-tRNA ligase activity"/>
    <property type="evidence" value="ECO:0007669"/>
    <property type="project" value="UniProtKB-UniRule"/>
</dbReference>
<dbReference type="GO" id="GO:0005524">
    <property type="term" value="F:ATP binding"/>
    <property type="evidence" value="ECO:0007669"/>
    <property type="project" value="UniProtKB-UniRule"/>
</dbReference>
<dbReference type="GO" id="GO:0003676">
    <property type="term" value="F:nucleic acid binding"/>
    <property type="evidence" value="ECO:0007669"/>
    <property type="project" value="InterPro"/>
</dbReference>
<dbReference type="GO" id="GO:0006421">
    <property type="term" value="P:asparaginyl-tRNA aminoacylation"/>
    <property type="evidence" value="ECO:0007669"/>
    <property type="project" value="UniProtKB-UniRule"/>
</dbReference>
<dbReference type="CDD" id="cd04323">
    <property type="entry name" value="AsnRS_cyto_like_N"/>
    <property type="match status" value="1"/>
</dbReference>
<dbReference type="CDD" id="cd00776">
    <property type="entry name" value="AsxRS_core"/>
    <property type="match status" value="1"/>
</dbReference>
<dbReference type="Gene3D" id="3.30.930.10">
    <property type="entry name" value="Bira Bifunctional Protein, Domain 2"/>
    <property type="match status" value="1"/>
</dbReference>
<dbReference type="Gene3D" id="2.40.50.140">
    <property type="entry name" value="Nucleic acid-binding proteins"/>
    <property type="match status" value="1"/>
</dbReference>
<dbReference type="HAMAP" id="MF_00534">
    <property type="entry name" value="Asn_tRNA_synth"/>
    <property type="match status" value="1"/>
</dbReference>
<dbReference type="InterPro" id="IPR004364">
    <property type="entry name" value="Aa-tRNA-synt_II"/>
</dbReference>
<dbReference type="InterPro" id="IPR006195">
    <property type="entry name" value="aa-tRNA-synth_II"/>
</dbReference>
<dbReference type="InterPro" id="IPR045864">
    <property type="entry name" value="aa-tRNA-synth_II/BPL/LPL"/>
</dbReference>
<dbReference type="InterPro" id="IPR004522">
    <property type="entry name" value="Asn-tRNA-ligase"/>
</dbReference>
<dbReference type="InterPro" id="IPR002312">
    <property type="entry name" value="Asp/Asn-tRNA-synth_IIb"/>
</dbReference>
<dbReference type="InterPro" id="IPR012340">
    <property type="entry name" value="NA-bd_OB-fold"/>
</dbReference>
<dbReference type="InterPro" id="IPR004365">
    <property type="entry name" value="NA-bd_OB_tRNA"/>
</dbReference>
<dbReference type="NCBIfam" id="TIGR00457">
    <property type="entry name" value="asnS"/>
    <property type="match status" value="1"/>
</dbReference>
<dbReference type="NCBIfam" id="NF003037">
    <property type="entry name" value="PRK03932.1"/>
    <property type="match status" value="1"/>
</dbReference>
<dbReference type="PANTHER" id="PTHR22594:SF34">
    <property type="entry name" value="ASPARAGINE--TRNA LIGASE, MITOCHONDRIAL-RELATED"/>
    <property type="match status" value="1"/>
</dbReference>
<dbReference type="PANTHER" id="PTHR22594">
    <property type="entry name" value="ASPARTYL/LYSYL-TRNA SYNTHETASE"/>
    <property type="match status" value="1"/>
</dbReference>
<dbReference type="Pfam" id="PF00152">
    <property type="entry name" value="tRNA-synt_2"/>
    <property type="match status" value="1"/>
</dbReference>
<dbReference type="Pfam" id="PF01336">
    <property type="entry name" value="tRNA_anti-codon"/>
    <property type="match status" value="1"/>
</dbReference>
<dbReference type="PRINTS" id="PR01042">
    <property type="entry name" value="TRNASYNTHASP"/>
</dbReference>
<dbReference type="SUPFAM" id="SSF55681">
    <property type="entry name" value="Class II aaRS and biotin synthetases"/>
    <property type="match status" value="1"/>
</dbReference>
<dbReference type="SUPFAM" id="SSF50249">
    <property type="entry name" value="Nucleic acid-binding proteins"/>
    <property type="match status" value="1"/>
</dbReference>
<dbReference type="PROSITE" id="PS50862">
    <property type="entry name" value="AA_TRNA_LIGASE_II"/>
    <property type="match status" value="1"/>
</dbReference>